<sequence>MKVIRDSIHKDIYLDEKELEIIDSEEFQRLRNIKQTGLTYLVYPSANHTRFEHSLGTMFIASKIAEKINADVELTRVSALLHDIGHPPFSHTLEICGYSHEVFGRKKIKHMNLDNFSKSEIIKTLNRKNLEGKIISGDVDADRMDYLLRDSYHTGTAYGMIDLPRILRSITTFESFGKVKIGILKKGIQAIESLLVARHQMYSAVYMHPTVRIADTMIKRAVIKEIQEKNLDIKDLANMDDIALVSFLRISENYLMERIDRRNLYKNLITYSYFDLNPIEKWIFVNLDEKQILSLESRFYEEFGWDIFIDIYPIPKMEEHNVYIISDEGVKRLDEVSPLAQSLKPSEMRLWNISIYAPKEKIKELRENNVKDRINKILKELDVKVESKLIDILKEYGTITGKRRFLEIAKERGISPKEFYNELHKLIFCGLIKERFNRRTYVYCLNNFVKL</sequence>
<accession>Q58554</accession>
<name>Y1154_METJA</name>
<proteinExistence type="predicted"/>
<reference key="1">
    <citation type="journal article" date="1996" name="Science">
        <title>Complete genome sequence of the methanogenic archaeon, Methanococcus jannaschii.</title>
        <authorList>
            <person name="Bult C.J."/>
            <person name="White O."/>
            <person name="Olsen G.J."/>
            <person name="Zhou L."/>
            <person name="Fleischmann R.D."/>
            <person name="Sutton G.G."/>
            <person name="Blake J.A."/>
            <person name="FitzGerald L.M."/>
            <person name="Clayton R.A."/>
            <person name="Gocayne J.D."/>
            <person name="Kerlavage A.R."/>
            <person name="Dougherty B.A."/>
            <person name="Tomb J.-F."/>
            <person name="Adams M.D."/>
            <person name="Reich C.I."/>
            <person name="Overbeek R."/>
            <person name="Kirkness E.F."/>
            <person name="Weinstock K.G."/>
            <person name="Merrick J.M."/>
            <person name="Glodek A."/>
            <person name="Scott J.L."/>
            <person name="Geoghagen N.S.M."/>
            <person name="Weidman J.F."/>
            <person name="Fuhrmann J.L."/>
            <person name="Nguyen D."/>
            <person name="Utterback T.R."/>
            <person name="Kelley J.M."/>
            <person name="Peterson J.D."/>
            <person name="Sadow P.W."/>
            <person name="Hanna M.C."/>
            <person name="Cotton M.D."/>
            <person name="Roberts K.M."/>
            <person name="Hurst M.A."/>
            <person name="Kaine B.P."/>
            <person name="Borodovsky M."/>
            <person name="Klenk H.-P."/>
            <person name="Fraser C.M."/>
            <person name="Smith H.O."/>
            <person name="Woese C.R."/>
            <person name="Venter J.C."/>
        </authorList>
    </citation>
    <scope>NUCLEOTIDE SEQUENCE [LARGE SCALE GENOMIC DNA]</scope>
    <source>
        <strain>ATCC 43067 / DSM 2661 / JAL-1 / JCM 10045 / NBRC 100440</strain>
    </source>
</reference>
<organism>
    <name type="scientific">Methanocaldococcus jannaschii (strain ATCC 43067 / DSM 2661 / JAL-1 / JCM 10045 / NBRC 100440)</name>
    <name type="common">Methanococcus jannaschii</name>
    <dbReference type="NCBI Taxonomy" id="243232"/>
    <lineage>
        <taxon>Archaea</taxon>
        <taxon>Methanobacteriati</taxon>
        <taxon>Methanobacteriota</taxon>
        <taxon>Methanomada group</taxon>
        <taxon>Methanococci</taxon>
        <taxon>Methanococcales</taxon>
        <taxon>Methanocaldococcaceae</taxon>
        <taxon>Methanocaldococcus</taxon>
    </lineage>
</organism>
<gene>
    <name type="ordered locus">MJ1154</name>
</gene>
<dbReference type="EMBL" id="L77117">
    <property type="protein sequence ID" value="AAB99151.1"/>
    <property type="molecule type" value="Genomic_DNA"/>
</dbReference>
<dbReference type="PIR" id="A64444">
    <property type="entry name" value="A64444"/>
</dbReference>
<dbReference type="RefSeq" id="WP_010870665.1">
    <property type="nucleotide sequence ID" value="NC_000909.1"/>
</dbReference>
<dbReference type="SMR" id="Q58554"/>
<dbReference type="FunCoup" id="Q58554">
    <property type="interactions" value="104"/>
</dbReference>
<dbReference type="STRING" id="243232.MJ_1154"/>
<dbReference type="PaxDb" id="243232-MJ_1154"/>
<dbReference type="DNASU" id="1452050"/>
<dbReference type="EnsemblBacteria" id="AAB99151">
    <property type="protein sequence ID" value="AAB99151"/>
    <property type="gene ID" value="MJ_1154"/>
</dbReference>
<dbReference type="GeneID" id="1452050"/>
<dbReference type="KEGG" id="mja:MJ_1154"/>
<dbReference type="eggNOG" id="arCOG04430">
    <property type="taxonomic scope" value="Archaea"/>
</dbReference>
<dbReference type="HOGENOM" id="CLU_026821_3_0_2"/>
<dbReference type="InParanoid" id="Q58554"/>
<dbReference type="OrthoDB" id="8895at2157"/>
<dbReference type="PhylomeDB" id="Q58554"/>
<dbReference type="Proteomes" id="UP000000805">
    <property type="component" value="Chromosome"/>
</dbReference>
<dbReference type="GO" id="GO:0008832">
    <property type="term" value="F:dGTPase activity"/>
    <property type="evidence" value="ECO:0000318"/>
    <property type="project" value="GO_Central"/>
</dbReference>
<dbReference type="GO" id="GO:0006203">
    <property type="term" value="P:dGTP catabolic process"/>
    <property type="evidence" value="ECO:0000318"/>
    <property type="project" value="GO_Central"/>
</dbReference>
<dbReference type="CDD" id="cd00077">
    <property type="entry name" value="HDc"/>
    <property type="match status" value="1"/>
</dbReference>
<dbReference type="Gene3D" id="1.10.3210.10">
    <property type="entry name" value="Hypothetical protein af1432"/>
    <property type="match status" value="1"/>
</dbReference>
<dbReference type="InterPro" id="IPR050135">
    <property type="entry name" value="dGTPase-like"/>
</dbReference>
<dbReference type="InterPro" id="IPR003607">
    <property type="entry name" value="HD/PDEase_dom"/>
</dbReference>
<dbReference type="InterPro" id="IPR045509">
    <property type="entry name" value="HD_assoc_2"/>
</dbReference>
<dbReference type="InterPro" id="IPR006674">
    <property type="entry name" value="HD_domain"/>
</dbReference>
<dbReference type="InterPro" id="IPR006675">
    <property type="entry name" value="HDIG_dom"/>
</dbReference>
<dbReference type="NCBIfam" id="TIGR00277">
    <property type="entry name" value="HDIG"/>
    <property type="match status" value="1"/>
</dbReference>
<dbReference type="PANTHER" id="PTHR11373">
    <property type="entry name" value="DEOXYNUCLEOSIDE TRIPHOSPHATE TRIPHOSPHOHYDROLASE"/>
    <property type="match status" value="1"/>
</dbReference>
<dbReference type="PANTHER" id="PTHR11373:SF4">
    <property type="entry name" value="DEOXYNUCLEOSIDE TRIPHOSPHATE TRIPHOSPHOHYDROLASE SAMHD1"/>
    <property type="match status" value="1"/>
</dbReference>
<dbReference type="Pfam" id="PF01966">
    <property type="entry name" value="HD"/>
    <property type="match status" value="1"/>
</dbReference>
<dbReference type="Pfam" id="PF19276">
    <property type="entry name" value="HD_assoc_2"/>
    <property type="match status" value="1"/>
</dbReference>
<dbReference type="SMART" id="SM00471">
    <property type="entry name" value="HDc"/>
    <property type="match status" value="1"/>
</dbReference>
<dbReference type="SUPFAM" id="SSF109604">
    <property type="entry name" value="HD-domain/PDEase-like"/>
    <property type="match status" value="1"/>
</dbReference>
<dbReference type="PROSITE" id="PS51831">
    <property type="entry name" value="HD"/>
    <property type="match status" value="1"/>
</dbReference>
<protein>
    <recommendedName>
        <fullName>Uncharacterized protein MJ1154</fullName>
    </recommendedName>
</protein>
<feature type="chain" id="PRO_0000107192" description="Uncharacterized protein MJ1154">
    <location>
        <begin position="1"/>
        <end position="451"/>
    </location>
</feature>
<feature type="domain" description="HD" evidence="1">
    <location>
        <begin position="50"/>
        <end position="147"/>
    </location>
</feature>
<keyword id="KW-1185">Reference proteome</keyword>
<evidence type="ECO:0000255" key="1">
    <source>
        <dbReference type="PROSITE-ProRule" id="PRU01175"/>
    </source>
</evidence>